<dbReference type="EC" id="7.6.2.-" evidence="1"/>
<dbReference type="EMBL" id="AE006914">
    <property type="protein sequence ID" value="AAL03615.1"/>
    <property type="molecule type" value="Genomic_DNA"/>
</dbReference>
<dbReference type="PIR" id="E97834">
    <property type="entry name" value="E97834"/>
</dbReference>
<dbReference type="RefSeq" id="WP_010977655.1">
    <property type="nucleotide sequence ID" value="NC_003103.1"/>
</dbReference>
<dbReference type="SMR" id="Q92GP5"/>
<dbReference type="GeneID" id="928225"/>
<dbReference type="KEGG" id="rco:RC1077"/>
<dbReference type="PATRIC" id="fig|272944.4.peg.1233"/>
<dbReference type="HOGENOM" id="CLU_000604_1_22_5"/>
<dbReference type="Proteomes" id="UP000000816">
    <property type="component" value="Chromosome"/>
</dbReference>
<dbReference type="GO" id="GO:0005886">
    <property type="term" value="C:plasma membrane"/>
    <property type="evidence" value="ECO:0007669"/>
    <property type="project" value="UniProtKB-SubCell"/>
</dbReference>
<dbReference type="GO" id="GO:0005524">
    <property type="term" value="F:ATP binding"/>
    <property type="evidence" value="ECO:0007669"/>
    <property type="project" value="UniProtKB-KW"/>
</dbReference>
<dbReference type="GO" id="GO:0016887">
    <property type="term" value="F:ATP hydrolysis activity"/>
    <property type="evidence" value="ECO:0007669"/>
    <property type="project" value="InterPro"/>
</dbReference>
<dbReference type="CDD" id="cd03255">
    <property type="entry name" value="ABC_MJ0796_LolCDE_FtsE"/>
    <property type="match status" value="1"/>
</dbReference>
<dbReference type="FunFam" id="3.40.50.300:FF:000032">
    <property type="entry name" value="Export ABC transporter ATP-binding protein"/>
    <property type="match status" value="1"/>
</dbReference>
<dbReference type="Gene3D" id="3.40.50.300">
    <property type="entry name" value="P-loop containing nucleotide triphosphate hydrolases"/>
    <property type="match status" value="1"/>
</dbReference>
<dbReference type="InterPro" id="IPR003593">
    <property type="entry name" value="AAA+_ATPase"/>
</dbReference>
<dbReference type="InterPro" id="IPR003439">
    <property type="entry name" value="ABC_transporter-like_ATP-bd"/>
</dbReference>
<dbReference type="InterPro" id="IPR017871">
    <property type="entry name" value="ABC_transporter-like_CS"/>
</dbReference>
<dbReference type="InterPro" id="IPR017911">
    <property type="entry name" value="MacB-like_ATP-bd"/>
</dbReference>
<dbReference type="InterPro" id="IPR027417">
    <property type="entry name" value="P-loop_NTPase"/>
</dbReference>
<dbReference type="PANTHER" id="PTHR42798:SF2">
    <property type="entry name" value="ABC TRANSPORTER ATP-BINDING PROTEIN MG467-RELATED"/>
    <property type="match status" value="1"/>
</dbReference>
<dbReference type="PANTHER" id="PTHR42798">
    <property type="entry name" value="LIPOPROTEIN-RELEASING SYSTEM ATP-BINDING PROTEIN LOLD"/>
    <property type="match status" value="1"/>
</dbReference>
<dbReference type="Pfam" id="PF00005">
    <property type="entry name" value="ABC_tran"/>
    <property type="match status" value="1"/>
</dbReference>
<dbReference type="SMART" id="SM00382">
    <property type="entry name" value="AAA"/>
    <property type="match status" value="1"/>
</dbReference>
<dbReference type="SUPFAM" id="SSF52540">
    <property type="entry name" value="P-loop containing nucleoside triphosphate hydrolases"/>
    <property type="match status" value="1"/>
</dbReference>
<dbReference type="PROSITE" id="PS00211">
    <property type="entry name" value="ABC_TRANSPORTER_1"/>
    <property type="match status" value="1"/>
</dbReference>
<dbReference type="PROSITE" id="PS50893">
    <property type="entry name" value="ABC_TRANSPORTER_2"/>
    <property type="match status" value="1"/>
</dbReference>
<dbReference type="PROSITE" id="PS51244">
    <property type="entry name" value="LOLD"/>
    <property type="match status" value="1"/>
</dbReference>
<name>LOLD_RICCN</name>
<sequence>MNNTILILKNISKHYSQGKTIVRVLDDLNLTVNEGELIAIIGSSGSGKSTLLHIAGLLDKPTKGQVIIPNSKYQKYHLIRLHYLGFIYQQHHLLKDFTALENVIMPRLISGLDQKEAIEDATKILDDLGLGKKLYNMPGELSGGEKQRVAIARSLINKPKIILADEPTGNLDPKTTNEVFNLFLKVAREQNTAIIMVTHNYELAHKMDKLYKLKHRLLNIA</sequence>
<gene>
    <name evidence="1" type="primary">lolD</name>
    <name type="ordered locus">RC1077</name>
</gene>
<reference key="1">
    <citation type="journal article" date="2001" name="Science">
        <title>Mechanisms of evolution in Rickettsia conorii and R. prowazekii.</title>
        <authorList>
            <person name="Ogata H."/>
            <person name="Audic S."/>
            <person name="Renesto-Audiffren P."/>
            <person name="Fournier P.-E."/>
            <person name="Barbe V."/>
            <person name="Samson D."/>
            <person name="Roux V."/>
            <person name="Cossart P."/>
            <person name="Weissenbach J."/>
            <person name="Claverie J.-M."/>
            <person name="Raoult D."/>
        </authorList>
    </citation>
    <scope>NUCLEOTIDE SEQUENCE [LARGE SCALE GENOMIC DNA]</scope>
    <source>
        <strain>ATCC VR-613 / Malish 7</strain>
    </source>
</reference>
<comment type="function">
    <text evidence="1">Part of the ABC transporter complex LolCDE involved in the translocation of mature outer membrane-directed lipoproteins, from the inner membrane to the periplasmic chaperone, LolA. Responsible for the formation of the LolA-lipoprotein complex in an ATP-dependent manner.</text>
</comment>
<comment type="subunit">
    <text evidence="1">The complex is composed of two ATP-binding proteins (LolD) and two transmembrane proteins (LolC and LolE).</text>
</comment>
<comment type="subcellular location">
    <subcellularLocation>
        <location evidence="1">Cell inner membrane</location>
        <topology evidence="1">Peripheral membrane protein</topology>
    </subcellularLocation>
</comment>
<comment type="similarity">
    <text evidence="1">Belongs to the ABC transporter superfamily. Lipoprotein translocase (TC 3.A.1.125) family.</text>
</comment>
<accession>Q92GP5</accession>
<organism>
    <name type="scientific">Rickettsia conorii (strain ATCC VR-613 / Malish 7)</name>
    <dbReference type="NCBI Taxonomy" id="272944"/>
    <lineage>
        <taxon>Bacteria</taxon>
        <taxon>Pseudomonadati</taxon>
        <taxon>Pseudomonadota</taxon>
        <taxon>Alphaproteobacteria</taxon>
        <taxon>Rickettsiales</taxon>
        <taxon>Rickettsiaceae</taxon>
        <taxon>Rickettsieae</taxon>
        <taxon>Rickettsia</taxon>
        <taxon>spotted fever group</taxon>
    </lineage>
</organism>
<proteinExistence type="inferred from homology"/>
<keyword id="KW-0067">ATP-binding</keyword>
<keyword id="KW-0997">Cell inner membrane</keyword>
<keyword id="KW-1003">Cell membrane</keyword>
<keyword id="KW-0472">Membrane</keyword>
<keyword id="KW-0547">Nucleotide-binding</keyword>
<keyword id="KW-1278">Translocase</keyword>
<keyword id="KW-0813">Transport</keyword>
<evidence type="ECO:0000255" key="1">
    <source>
        <dbReference type="HAMAP-Rule" id="MF_01708"/>
    </source>
</evidence>
<feature type="chain" id="PRO_0000092456" description="Lipoprotein-releasing system ATP-binding protein LolD">
    <location>
        <begin position="1"/>
        <end position="221"/>
    </location>
</feature>
<feature type="domain" description="ABC transporter" evidence="1">
    <location>
        <begin position="6"/>
        <end position="220"/>
    </location>
</feature>
<feature type="binding site" evidence="1">
    <location>
        <begin position="42"/>
        <end position="49"/>
    </location>
    <ligand>
        <name>ATP</name>
        <dbReference type="ChEBI" id="CHEBI:30616"/>
    </ligand>
</feature>
<protein>
    <recommendedName>
        <fullName evidence="1">Lipoprotein-releasing system ATP-binding protein LolD</fullName>
        <ecNumber evidence="1">7.6.2.-</ecNumber>
    </recommendedName>
</protein>